<reference key="1">
    <citation type="journal article" date="2008" name="J. Bacteriol.">
        <title>The complete genome sequence of Escherichia coli DH10B: insights into the biology of a laboratory workhorse.</title>
        <authorList>
            <person name="Durfee T."/>
            <person name="Nelson R."/>
            <person name="Baldwin S."/>
            <person name="Plunkett G. III"/>
            <person name="Burland V."/>
            <person name="Mau B."/>
            <person name="Petrosino J.F."/>
            <person name="Qin X."/>
            <person name="Muzny D.M."/>
            <person name="Ayele M."/>
            <person name="Gibbs R.A."/>
            <person name="Csorgo B."/>
            <person name="Posfai G."/>
            <person name="Weinstock G.M."/>
            <person name="Blattner F.R."/>
        </authorList>
    </citation>
    <scope>NUCLEOTIDE SEQUENCE [LARGE SCALE GENOMIC DNA]</scope>
    <source>
        <strain>K12 / DH10B</strain>
    </source>
</reference>
<sequence length="332" mass="36834">MKTLGEFIVEKQHEFSHATGELTALLSAIKLGAKIIHRDINKAGLVDILGASGAENVQGEVQQKLDLFANEKLKAALKARDIVAGIASEEEDEIVVFEGCEHAKYVVLMDPLDGSSNIDVNVSVGTIFSIYRRVTPVGTPVTEEDFLQPGNKQVAAGYVVYGSSTMLVYTTGCGVHAFTYDPSLGVFCLCQERMRFPEKGKTYSINEGNYIKFPNGVKKYIKFCQEEDKSTNRPYTSRYIGSLVADFHRNLLKGGIYLYPSTASHPDGKLRLLYECNPMAFLAEQAGGKASDGKERILDIIPETLHQRRSFFVGNDHMVEDVERFIREFPDA</sequence>
<gene>
    <name evidence="1" type="primary">fbp</name>
    <name type="ordered locus">ECDH10B_4427</name>
</gene>
<name>F16PA_ECODH</name>
<keyword id="KW-0119">Carbohydrate metabolism</keyword>
<keyword id="KW-0963">Cytoplasm</keyword>
<keyword id="KW-0378">Hydrolase</keyword>
<keyword id="KW-0460">Magnesium</keyword>
<keyword id="KW-0479">Metal-binding</keyword>
<evidence type="ECO:0000255" key="1">
    <source>
        <dbReference type="HAMAP-Rule" id="MF_01855"/>
    </source>
</evidence>
<protein>
    <recommendedName>
        <fullName evidence="1">Fructose-1,6-bisphosphatase class 1</fullName>
        <shortName evidence="1">FBPase class 1</shortName>
        <ecNumber evidence="1">3.1.3.11</ecNumber>
    </recommendedName>
    <alternativeName>
        <fullName evidence="1">D-fructose-1,6-bisphosphate 1-phosphohydrolase class 1</fullName>
    </alternativeName>
</protein>
<proteinExistence type="inferred from homology"/>
<feature type="chain" id="PRO_0000364546" description="Fructose-1,6-bisphosphatase class 1">
    <location>
        <begin position="1"/>
        <end position="332"/>
    </location>
</feature>
<feature type="binding site" evidence="1">
    <location>
        <position position="89"/>
    </location>
    <ligand>
        <name>Mg(2+)</name>
        <dbReference type="ChEBI" id="CHEBI:18420"/>
        <label>1</label>
    </ligand>
</feature>
<feature type="binding site" evidence="1">
    <location>
        <position position="110"/>
    </location>
    <ligand>
        <name>Mg(2+)</name>
        <dbReference type="ChEBI" id="CHEBI:18420"/>
        <label>1</label>
    </ligand>
</feature>
<feature type="binding site" evidence="1">
    <location>
        <position position="110"/>
    </location>
    <ligand>
        <name>Mg(2+)</name>
        <dbReference type="ChEBI" id="CHEBI:18420"/>
        <label>2</label>
    </ligand>
</feature>
<feature type="binding site" evidence="1">
    <location>
        <position position="112"/>
    </location>
    <ligand>
        <name>Mg(2+)</name>
        <dbReference type="ChEBI" id="CHEBI:18420"/>
        <label>1</label>
    </ligand>
</feature>
<feature type="binding site" evidence="1">
    <location>
        <begin position="113"/>
        <end position="116"/>
    </location>
    <ligand>
        <name>substrate</name>
    </ligand>
</feature>
<feature type="binding site" evidence="1">
    <location>
        <position position="113"/>
    </location>
    <ligand>
        <name>Mg(2+)</name>
        <dbReference type="ChEBI" id="CHEBI:18420"/>
        <label>2</label>
    </ligand>
</feature>
<feature type="binding site" evidence="1">
    <location>
        <position position="206"/>
    </location>
    <ligand>
        <name>substrate</name>
    </ligand>
</feature>
<feature type="binding site" evidence="1">
    <location>
        <position position="239"/>
    </location>
    <ligand>
        <name>substrate</name>
    </ligand>
</feature>
<feature type="binding site" evidence="1">
    <location>
        <begin position="257"/>
        <end position="259"/>
    </location>
    <ligand>
        <name>substrate</name>
    </ligand>
</feature>
<feature type="binding site" evidence="1">
    <location>
        <position position="269"/>
    </location>
    <ligand>
        <name>substrate</name>
    </ligand>
</feature>
<feature type="binding site" evidence="1">
    <location>
        <position position="275"/>
    </location>
    <ligand>
        <name>Mg(2+)</name>
        <dbReference type="ChEBI" id="CHEBI:18420"/>
        <label>2</label>
    </ligand>
</feature>
<dbReference type="EC" id="3.1.3.11" evidence="1"/>
<dbReference type="EMBL" id="CP000948">
    <property type="protein sequence ID" value="ACB05216.1"/>
    <property type="molecule type" value="Genomic_DNA"/>
</dbReference>
<dbReference type="RefSeq" id="WP_000853753.1">
    <property type="nucleotide sequence ID" value="NC_010473.1"/>
</dbReference>
<dbReference type="SMR" id="B1XEL4"/>
<dbReference type="GeneID" id="86861371"/>
<dbReference type="KEGG" id="ecd:ECDH10B_4427"/>
<dbReference type="HOGENOM" id="CLU_039977_2_2_6"/>
<dbReference type="UniPathway" id="UPA00138"/>
<dbReference type="GO" id="GO:0005829">
    <property type="term" value="C:cytosol"/>
    <property type="evidence" value="ECO:0007669"/>
    <property type="project" value="TreeGrafter"/>
</dbReference>
<dbReference type="GO" id="GO:0042132">
    <property type="term" value="F:fructose 1,6-bisphosphate 1-phosphatase activity"/>
    <property type="evidence" value="ECO:0007669"/>
    <property type="project" value="UniProtKB-UniRule"/>
</dbReference>
<dbReference type="GO" id="GO:0000287">
    <property type="term" value="F:magnesium ion binding"/>
    <property type="evidence" value="ECO:0007669"/>
    <property type="project" value="UniProtKB-UniRule"/>
</dbReference>
<dbReference type="GO" id="GO:0030388">
    <property type="term" value="P:fructose 1,6-bisphosphate metabolic process"/>
    <property type="evidence" value="ECO:0007669"/>
    <property type="project" value="TreeGrafter"/>
</dbReference>
<dbReference type="GO" id="GO:0006002">
    <property type="term" value="P:fructose 6-phosphate metabolic process"/>
    <property type="evidence" value="ECO:0007669"/>
    <property type="project" value="TreeGrafter"/>
</dbReference>
<dbReference type="GO" id="GO:0006000">
    <property type="term" value="P:fructose metabolic process"/>
    <property type="evidence" value="ECO:0007669"/>
    <property type="project" value="TreeGrafter"/>
</dbReference>
<dbReference type="GO" id="GO:0006094">
    <property type="term" value="P:gluconeogenesis"/>
    <property type="evidence" value="ECO:0007669"/>
    <property type="project" value="UniProtKB-UniRule"/>
</dbReference>
<dbReference type="GO" id="GO:0005986">
    <property type="term" value="P:sucrose biosynthetic process"/>
    <property type="evidence" value="ECO:0007669"/>
    <property type="project" value="TreeGrafter"/>
</dbReference>
<dbReference type="CDD" id="cd00354">
    <property type="entry name" value="FBPase"/>
    <property type="match status" value="1"/>
</dbReference>
<dbReference type="FunFam" id="3.30.540.10:FF:000002">
    <property type="entry name" value="Fructose-1,6-bisphosphatase class 1"/>
    <property type="match status" value="1"/>
</dbReference>
<dbReference type="FunFam" id="3.40.190.80:FF:000001">
    <property type="entry name" value="Fructose-1,6-bisphosphatase class 1"/>
    <property type="match status" value="1"/>
</dbReference>
<dbReference type="Gene3D" id="3.40.190.80">
    <property type="match status" value="1"/>
</dbReference>
<dbReference type="Gene3D" id="3.30.540.10">
    <property type="entry name" value="Fructose-1,6-Bisphosphatase, subunit A, domain 1"/>
    <property type="match status" value="1"/>
</dbReference>
<dbReference type="HAMAP" id="MF_01855">
    <property type="entry name" value="FBPase_class1"/>
    <property type="match status" value="1"/>
</dbReference>
<dbReference type="InterPro" id="IPR044015">
    <property type="entry name" value="FBPase_C_dom"/>
</dbReference>
<dbReference type="InterPro" id="IPR000146">
    <property type="entry name" value="FBPase_class-1"/>
</dbReference>
<dbReference type="InterPro" id="IPR033391">
    <property type="entry name" value="FBPase_N"/>
</dbReference>
<dbReference type="InterPro" id="IPR028343">
    <property type="entry name" value="FBPtase"/>
</dbReference>
<dbReference type="InterPro" id="IPR020548">
    <property type="entry name" value="Fructose_bisphosphatase_AS"/>
</dbReference>
<dbReference type="NCBIfam" id="NF006778">
    <property type="entry name" value="PRK09293.1-1"/>
    <property type="match status" value="1"/>
</dbReference>
<dbReference type="NCBIfam" id="NF006779">
    <property type="entry name" value="PRK09293.1-3"/>
    <property type="match status" value="1"/>
</dbReference>
<dbReference type="PANTHER" id="PTHR11556">
    <property type="entry name" value="FRUCTOSE-1,6-BISPHOSPHATASE-RELATED"/>
    <property type="match status" value="1"/>
</dbReference>
<dbReference type="PANTHER" id="PTHR11556:SF35">
    <property type="entry name" value="SEDOHEPTULOSE-1,7-BISPHOSPHATASE, CHLOROPLASTIC"/>
    <property type="match status" value="1"/>
</dbReference>
<dbReference type="Pfam" id="PF00316">
    <property type="entry name" value="FBPase"/>
    <property type="match status" value="1"/>
</dbReference>
<dbReference type="Pfam" id="PF18913">
    <property type="entry name" value="FBPase_C"/>
    <property type="match status" value="1"/>
</dbReference>
<dbReference type="PIRSF" id="PIRSF500210">
    <property type="entry name" value="FBPtase"/>
    <property type="match status" value="1"/>
</dbReference>
<dbReference type="PIRSF" id="PIRSF000904">
    <property type="entry name" value="FBPtase_SBPase"/>
    <property type="match status" value="1"/>
</dbReference>
<dbReference type="PRINTS" id="PR00115">
    <property type="entry name" value="F16BPHPHTASE"/>
</dbReference>
<dbReference type="SUPFAM" id="SSF56655">
    <property type="entry name" value="Carbohydrate phosphatase"/>
    <property type="match status" value="1"/>
</dbReference>
<dbReference type="PROSITE" id="PS00124">
    <property type="entry name" value="FBPASE"/>
    <property type="match status" value="1"/>
</dbReference>
<organism>
    <name type="scientific">Escherichia coli (strain K12 / DH10B)</name>
    <dbReference type="NCBI Taxonomy" id="316385"/>
    <lineage>
        <taxon>Bacteria</taxon>
        <taxon>Pseudomonadati</taxon>
        <taxon>Pseudomonadota</taxon>
        <taxon>Gammaproteobacteria</taxon>
        <taxon>Enterobacterales</taxon>
        <taxon>Enterobacteriaceae</taxon>
        <taxon>Escherichia</taxon>
    </lineage>
</organism>
<accession>B1XEL4</accession>
<comment type="catalytic activity">
    <reaction evidence="1">
        <text>beta-D-fructose 1,6-bisphosphate + H2O = beta-D-fructose 6-phosphate + phosphate</text>
        <dbReference type="Rhea" id="RHEA:11064"/>
        <dbReference type="ChEBI" id="CHEBI:15377"/>
        <dbReference type="ChEBI" id="CHEBI:32966"/>
        <dbReference type="ChEBI" id="CHEBI:43474"/>
        <dbReference type="ChEBI" id="CHEBI:57634"/>
        <dbReference type="EC" id="3.1.3.11"/>
    </reaction>
</comment>
<comment type="cofactor">
    <cofactor evidence="1">
        <name>Mg(2+)</name>
        <dbReference type="ChEBI" id="CHEBI:18420"/>
    </cofactor>
    <text evidence="1">Binds 2 magnesium ions per subunit.</text>
</comment>
<comment type="pathway">
    <text evidence="1">Carbohydrate biosynthesis; gluconeogenesis.</text>
</comment>
<comment type="subunit">
    <text evidence="1">Homotetramer.</text>
</comment>
<comment type="subcellular location">
    <subcellularLocation>
        <location evidence="1">Cytoplasm</location>
    </subcellularLocation>
</comment>
<comment type="similarity">
    <text evidence="1">Belongs to the FBPase class 1 family.</text>
</comment>